<evidence type="ECO:0000255" key="1">
    <source>
        <dbReference type="HAMAP-Rule" id="MF_00049"/>
    </source>
</evidence>
<evidence type="ECO:0000305" key="2"/>
<accession>Q50192</accession>
<proteinExistence type="inferred from homology"/>
<organism>
    <name type="scientific">Mycobacterium leprae (strain TN)</name>
    <dbReference type="NCBI Taxonomy" id="272631"/>
    <lineage>
        <taxon>Bacteria</taxon>
        <taxon>Bacillati</taxon>
        <taxon>Actinomycetota</taxon>
        <taxon>Actinomycetes</taxon>
        <taxon>Mycobacteriales</taxon>
        <taxon>Mycobacteriaceae</taxon>
        <taxon>Mycobacterium</taxon>
    </lineage>
</organism>
<gene>
    <name evidence="1" type="primary">leuS</name>
    <name type="ordered locus">ML0032</name>
    <name type="ORF">MLB1770.20</name>
    <name type="ORF">MLCB628.03</name>
</gene>
<sequence length="972" mass="108408">MTELPTTVPGYNSAVAQTDSDAMRYRYTAELAGRIESTWQDNWARLQTFNVPNPVGSLAPPDGSVVPADKLFVQDMFPYPSGDGLHVGHPLGYIATDVYARYFRMTGHNVLHAMGFDAFGLPAEQYAMQTGTHPRILTEANVVNFRHQLGRLGLGHDSRRTFSTTDVEFYKWTQWIFLQIYNAWFDVAANKARPIAELIAEFDSGERRLVDGRDWATLSAGERADVIDNCRLVYRADSMVNWCPGLGTVLANEEVTADGRSDRGNFPVFRKRLRQWMMRITAYADRLLDDLDLLDWPEQVKTMQRNWIGRSSGATVLFSAILSRSDAATTEVDVEVFTTRPDTMFGVTYLVLAPEHNLVDELVATVWPDRTDPRWTYGAATPGAAVAAYRRAIVAKSDLDRQESKEKTGVFLGRYATNPATGKPVPIFVADYVLVGYGTGAVMAVPGHDPRDWDFAHKFHLPIVEVIAGSDISEAAYVGDGVLVNSGYLDGMDVATAQEAITARLESEGRGHARIEFKLRDWLFARQRYWGEPFPIIYDSDGRPHALDEAALPVELPDVPYYSPVLFDPDDADSEPSPPLAKATEWVHVELDLGDGLKPYSRDTNVMPQWAGSSWYELRYTDPHNSERLCAKENEAYWMGPRPTEHGIDDPGGVDLYVGGAEHAVLHLLYARFWHKVLYDLGHVSSREPYRRLINQGYIQAFAYTDAHGSYVPANQVFQRGDGFFCPGPDGEIEVFQEFGKIGKSLKNSVSPDEICDEYGADTLRVYEMSMGPLEASRPWATKDVVGAYRFLQRVWRLVVDERTGETRVVDTAGELDTYTLRTLHRTIAGVSQDYAALRNNTATAKLIEYTNHLTKEHRGSVPRVAVEPLVLMLAPLAPHLAEELWLRLGHTTSLANGPFPQADPAYLVDDTVEYPVQVNGKIRGRIVVAADADYDTLKTVALADDKVQQFLAGATPRKVIVVAGRLISLVI</sequence>
<comment type="catalytic activity">
    <reaction evidence="1">
        <text>tRNA(Leu) + L-leucine + ATP = L-leucyl-tRNA(Leu) + AMP + diphosphate</text>
        <dbReference type="Rhea" id="RHEA:11688"/>
        <dbReference type="Rhea" id="RHEA-COMP:9613"/>
        <dbReference type="Rhea" id="RHEA-COMP:9622"/>
        <dbReference type="ChEBI" id="CHEBI:30616"/>
        <dbReference type="ChEBI" id="CHEBI:33019"/>
        <dbReference type="ChEBI" id="CHEBI:57427"/>
        <dbReference type="ChEBI" id="CHEBI:78442"/>
        <dbReference type="ChEBI" id="CHEBI:78494"/>
        <dbReference type="ChEBI" id="CHEBI:456215"/>
        <dbReference type="EC" id="6.1.1.4"/>
    </reaction>
</comment>
<comment type="subcellular location">
    <subcellularLocation>
        <location evidence="1">Cytoplasm</location>
    </subcellularLocation>
</comment>
<comment type="similarity">
    <text evidence="1">Belongs to the class-I aminoacyl-tRNA synthetase family.</text>
</comment>
<reference key="1">
    <citation type="journal article" date="2001" name="Nature">
        <title>Massive gene decay in the leprosy bacillus.</title>
        <authorList>
            <person name="Cole S.T."/>
            <person name="Eiglmeier K."/>
            <person name="Parkhill J."/>
            <person name="James K.D."/>
            <person name="Thomson N.R."/>
            <person name="Wheeler P.R."/>
            <person name="Honore N."/>
            <person name="Garnier T."/>
            <person name="Churcher C.M."/>
            <person name="Harris D.E."/>
            <person name="Mungall K.L."/>
            <person name="Basham D."/>
            <person name="Brown D."/>
            <person name="Chillingworth T."/>
            <person name="Connor R."/>
            <person name="Davies R.M."/>
            <person name="Devlin K."/>
            <person name="Duthoy S."/>
            <person name="Feltwell T."/>
            <person name="Fraser A."/>
            <person name="Hamlin N."/>
            <person name="Holroyd S."/>
            <person name="Hornsby T."/>
            <person name="Jagels K."/>
            <person name="Lacroix C."/>
            <person name="Maclean J."/>
            <person name="Moule S."/>
            <person name="Murphy L.D."/>
            <person name="Oliver K."/>
            <person name="Quail M.A."/>
            <person name="Rajandream M.A."/>
            <person name="Rutherford K.M."/>
            <person name="Rutter S."/>
            <person name="Seeger K."/>
            <person name="Simon S."/>
            <person name="Simmonds M."/>
            <person name="Skelton J."/>
            <person name="Squares R."/>
            <person name="Squares S."/>
            <person name="Stevens K."/>
            <person name="Taylor K."/>
            <person name="Whitehead S."/>
            <person name="Woodward J.R."/>
            <person name="Barrell B.G."/>
        </authorList>
    </citation>
    <scope>NUCLEOTIDE SEQUENCE [LARGE SCALE GENOMIC DNA]</scope>
    <source>
        <strain>TN</strain>
    </source>
</reference>
<feature type="chain" id="PRO_0000152046" description="Leucine--tRNA ligase">
    <location>
        <begin position="1"/>
        <end position="972"/>
    </location>
</feature>
<feature type="short sequence motif" description="'HIGH' region">
    <location>
        <begin position="78"/>
        <end position="89"/>
    </location>
</feature>
<feature type="short sequence motif" description="'KMSKS' region">
    <location>
        <begin position="741"/>
        <end position="745"/>
    </location>
</feature>
<feature type="binding site" evidence="1">
    <location>
        <position position="744"/>
    </location>
    <ligand>
        <name>ATP</name>
        <dbReference type="ChEBI" id="CHEBI:30616"/>
    </ligand>
</feature>
<feature type="sequence conflict" description="In Ref. 1; CAA94727." evidence="2" ref="1">
    <original>GGAEHAVLHL</original>
    <variation>AEPNMRCYIC</variation>
    <location>
        <begin position="659"/>
        <end position="668"/>
    </location>
</feature>
<keyword id="KW-0030">Aminoacyl-tRNA synthetase</keyword>
<keyword id="KW-0067">ATP-binding</keyword>
<keyword id="KW-0963">Cytoplasm</keyword>
<keyword id="KW-0436">Ligase</keyword>
<keyword id="KW-0547">Nucleotide-binding</keyword>
<keyword id="KW-0648">Protein biosynthesis</keyword>
<keyword id="KW-1185">Reference proteome</keyword>
<name>SYL_MYCLE</name>
<protein>
    <recommendedName>
        <fullName evidence="1">Leucine--tRNA ligase</fullName>
        <ecNumber evidence="1">6.1.1.4</ecNumber>
    </recommendedName>
    <alternativeName>
        <fullName evidence="1">Leucyl-tRNA synthetase</fullName>
        <shortName evidence="1">LeuRS</shortName>
    </alternativeName>
</protein>
<dbReference type="EC" id="6.1.1.4" evidence="1"/>
<dbReference type="EMBL" id="Y14967">
    <property type="protein sequence ID" value="CAA75192.1"/>
    <property type="molecule type" value="Genomic_DNA"/>
</dbReference>
<dbReference type="EMBL" id="Z70722">
    <property type="protein sequence ID" value="CAA94727.1"/>
    <property type="molecule type" value="Genomic_DNA"/>
</dbReference>
<dbReference type="EMBL" id="AL583917">
    <property type="protein sequence ID" value="CAC29540.1"/>
    <property type="molecule type" value="Genomic_DNA"/>
</dbReference>
<dbReference type="PIR" id="T10023">
    <property type="entry name" value="T10023"/>
</dbReference>
<dbReference type="RefSeq" id="NP_301156.1">
    <property type="nucleotide sequence ID" value="NC_002677.1"/>
</dbReference>
<dbReference type="RefSeq" id="WP_010907481.1">
    <property type="nucleotide sequence ID" value="NC_002677.1"/>
</dbReference>
<dbReference type="SMR" id="Q50192"/>
<dbReference type="STRING" id="272631.gene:17573844"/>
<dbReference type="KEGG" id="mle:ML0032"/>
<dbReference type="PATRIC" id="fig|272631.5.peg.40"/>
<dbReference type="Leproma" id="ML0032"/>
<dbReference type="eggNOG" id="COG0495">
    <property type="taxonomic scope" value="Bacteria"/>
</dbReference>
<dbReference type="HOGENOM" id="CLU_004427_0_0_11"/>
<dbReference type="OrthoDB" id="9810365at2"/>
<dbReference type="Proteomes" id="UP000000806">
    <property type="component" value="Chromosome"/>
</dbReference>
<dbReference type="GO" id="GO:0005829">
    <property type="term" value="C:cytosol"/>
    <property type="evidence" value="ECO:0007669"/>
    <property type="project" value="TreeGrafter"/>
</dbReference>
<dbReference type="GO" id="GO:0002161">
    <property type="term" value="F:aminoacyl-tRNA deacylase activity"/>
    <property type="evidence" value="ECO:0007669"/>
    <property type="project" value="InterPro"/>
</dbReference>
<dbReference type="GO" id="GO:0005524">
    <property type="term" value="F:ATP binding"/>
    <property type="evidence" value="ECO:0007669"/>
    <property type="project" value="UniProtKB-UniRule"/>
</dbReference>
<dbReference type="GO" id="GO:0004823">
    <property type="term" value="F:leucine-tRNA ligase activity"/>
    <property type="evidence" value="ECO:0007669"/>
    <property type="project" value="UniProtKB-UniRule"/>
</dbReference>
<dbReference type="GO" id="GO:0006429">
    <property type="term" value="P:leucyl-tRNA aminoacylation"/>
    <property type="evidence" value="ECO:0007669"/>
    <property type="project" value="UniProtKB-UniRule"/>
</dbReference>
<dbReference type="CDD" id="cd07958">
    <property type="entry name" value="Anticodon_Ia_Leu_BEm"/>
    <property type="match status" value="1"/>
</dbReference>
<dbReference type="FunFam" id="3.40.50.620:FF:000060">
    <property type="entry name" value="Leucine--tRNA ligase"/>
    <property type="match status" value="1"/>
</dbReference>
<dbReference type="FunFam" id="3.40.50.620:FF:000087">
    <property type="entry name" value="Leucine--tRNA ligase"/>
    <property type="match status" value="1"/>
</dbReference>
<dbReference type="FunFam" id="3.90.740.10:FF:000017">
    <property type="entry name" value="Leucine--tRNA ligase"/>
    <property type="match status" value="1"/>
</dbReference>
<dbReference type="FunFam" id="1.10.730.10:FF:000011">
    <property type="entry name" value="Leucine--tRNA ligase chloroplastic/mitochondrial"/>
    <property type="match status" value="1"/>
</dbReference>
<dbReference type="Gene3D" id="3.40.50.620">
    <property type="entry name" value="HUPs"/>
    <property type="match status" value="2"/>
</dbReference>
<dbReference type="Gene3D" id="1.10.730.10">
    <property type="entry name" value="Isoleucyl-tRNA Synthetase, Domain 1"/>
    <property type="match status" value="2"/>
</dbReference>
<dbReference type="Gene3D" id="3.90.740.10">
    <property type="entry name" value="Valyl/Leucyl/Isoleucyl-tRNA synthetase, editing domain"/>
    <property type="match status" value="1"/>
</dbReference>
<dbReference type="HAMAP" id="MF_00049_B">
    <property type="entry name" value="Leu_tRNA_synth_B"/>
    <property type="match status" value="1"/>
</dbReference>
<dbReference type="InterPro" id="IPR001412">
    <property type="entry name" value="aa-tRNA-synth_I_CS"/>
</dbReference>
<dbReference type="InterPro" id="IPR002302">
    <property type="entry name" value="Leu-tRNA-ligase"/>
</dbReference>
<dbReference type="InterPro" id="IPR025709">
    <property type="entry name" value="Leu_tRNA-synth_edit"/>
</dbReference>
<dbReference type="InterPro" id="IPR013155">
    <property type="entry name" value="M/V/L/I-tRNA-synth_anticd-bd"/>
</dbReference>
<dbReference type="InterPro" id="IPR015413">
    <property type="entry name" value="Methionyl/Leucyl_tRNA_Synth"/>
</dbReference>
<dbReference type="InterPro" id="IPR014729">
    <property type="entry name" value="Rossmann-like_a/b/a_fold"/>
</dbReference>
<dbReference type="InterPro" id="IPR009080">
    <property type="entry name" value="tRNAsynth_Ia_anticodon-bd"/>
</dbReference>
<dbReference type="InterPro" id="IPR009008">
    <property type="entry name" value="Val/Leu/Ile-tRNA-synth_edit"/>
</dbReference>
<dbReference type="NCBIfam" id="TIGR00396">
    <property type="entry name" value="leuS_bact"/>
    <property type="match status" value="1"/>
</dbReference>
<dbReference type="PANTHER" id="PTHR43740:SF2">
    <property type="entry name" value="LEUCINE--TRNA LIGASE, MITOCHONDRIAL"/>
    <property type="match status" value="1"/>
</dbReference>
<dbReference type="PANTHER" id="PTHR43740">
    <property type="entry name" value="LEUCYL-TRNA SYNTHETASE"/>
    <property type="match status" value="1"/>
</dbReference>
<dbReference type="Pfam" id="PF08264">
    <property type="entry name" value="Anticodon_1"/>
    <property type="match status" value="1"/>
</dbReference>
<dbReference type="Pfam" id="PF13603">
    <property type="entry name" value="tRNA-synt_1_2"/>
    <property type="match status" value="1"/>
</dbReference>
<dbReference type="Pfam" id="PF09334">
    <property type="entry name" value="tRNA-synt_1g"/>
    <property type="match status" value="1"/>
</dbReference>
<dbReference type="PRINTS" id="PR00985">
    <property type="entry name" value="TRNASYNTHLEU"/>
</dbReference>
<dbReference type="SUPFAM" id="SSF47323">
    <property type="entry name" value="Anticodon-binding domain of a subclass of class I aminoacyl-tRNA synthetases"/>
    <property type="match status" value="1"/>
</dbReference>
<dbReference type="SUPFAM" id="SSF52374">
    <property type="entry name" value="Nucleotidylyl transferase"/>
    <property type="match status" value="1"/>
</dbReference>
<dbReference type="SUPFAM" id="SSF50677">
    <property type="entry name" value="ValRS/IleRS/LeuRS editing domain"/>
    <property type="match status" value="1"/>
</dbReference>
<dbReference type="PROSITE" id="PS00178">
    <property type="entry name" value="AA_TRNA_LIGASE_I"/>
    <property type="match status" value="1"/>
</dbReference>